<sequence length="513" mass="55222">MQLNSTEISELIKQRIAQFNVVSEAHNEGTIVSVSDGVIRIHGLADCMQGEMISLPGNRYAIALNLERDSVGAVVMGPYADLAEGMKVKCTGRILEVPVGRGLLGRVVNTLGAPIDGKGPLDHDGFSAVEAIAPGVIERQSVDQPVQTGYKAVDSMIPIGRGQRELIIGDRQTGKTALAIDAIINQRDSGIKCIYVAIGQKASTISNVVRKLEEHGALANTIVVVATASESAALQYLAPYAGCAMGEYFRDRGEDALIIYDDLSKQAVAYRQISLLLRRPPGREAFPGDVFYLHSRLLERAARVNAEYVEAFTKGEVKGKTGSLTALPIIETQAGDVSAFVPTNVISITDGQIFLETNLFNAGIRPAVNPGISVSRVGGAAQTKIMKKLSGGIRTALAQYRELAAFSQFASDLDDATRKQLDHGQKVTELLKQKQYAPMSVAQQSLVLFAAERGYLADVELSKIGSFEAALLAYVDRDHAPLMQEINQTGGYNDEIEGKLKGILDSFKATQSW</sequence>
<protein>
    <recommendedName>
        <fullName evidence="1">ATP synthase subunit alpha</fullName>
        <ecNumber evidence="1">7.1.2.2</ecNumber>
    </recommendedName>
    <alternativeName>
        <fullName evidence="1">ATP synthase F1 sector subunit alpha</fullName>
    </alternativeName>
    <alternativeName>
        <fullName evidence="1">F-ATPase subunit alpha</fullName>
    </alternativeName>
</protein>
<accession>B7MGF4</accession>
<keyword id="KW-0066">ATP synthesis</keyword>
<keyword id="KW-0067">ATP-binding</keyword>
<keyword id="KW-0997">Cell inner membrane</keyword>
<keyword id="KW-1003">Cell membrane</keyword>
<keyword id="KW-0139">CF(1)</keyword>
<keyword id="KW-0375">Hydrogen ion transport</keyword>
<keyword id="KW-0406">Ion transport</keyword>
<keyword id="KW-0472">Membrane</keyword>
<keyword id="KW-0547">Nucleotide-binding</keyword>
<keyword id="KW-1185">Reference proteome</keyword>
<keyword id="KW-1278">Translocase</keyword>
<keyword id="KW-0813">Transport</keyword>
<feature type="chain" id="PRO_1000143372" description="ATP synthase subunit alpha">
    <location>
        <begin position="1"/>
        <end position="513"/>
    </location>
</feature>
<feature type="binding site" evidence="1">
    <location>
        <begin position="169"/>
        <end position="176"/>
    </location>
    <ligand>
        <name>ATP</name>
        <dbReference type="ChEBI" id="CHEBI:30616"/>
    </ligand>
</feature>
<feature type="site" description="Required for activity" evidence="1">
    <location>
        <position position="373"/>
    </location>
</feature>
<name>ATPA_ECO45</name>
<gene>
    <name evidence="1" type="primary">atpA</name>
    <name type="ordered locus">ECS88_4156</name>
</gene>
<proteinExistence type="inferred from homology"/>
<reference key="1">
    <citation type="journal article" date="2009" name="PLoS Genet.">
        <title>Organised genome dynamics in the Escherichia coli species results in highly diverse adaptive paths.</title>
        <authorList>
            <person name="Touchon M."/>
            <person name="Hoede C."/>
            <person name="Tenaillon O."/>
            <person name="Barbe V."/>
            <person name="Baeriswyl S."/>
            <person name="Bidet P."/>
            <person name="Bingen E."/>
            <person name="Bonacorsi S."/>
            <person name="Bouchier C."/>
            <person name="Bouvet O."/>
            <person name="Calteau A."/>
            <person name="Chiapello H."/>
            <person name="Clermont O."/>
            <person name="Cruveiller S."/>
            <person name="Danchin A."/>
            <person name="Diard M."/>
            <person name="Dossat C."/>
            <person name="Karoui M.E."/>
            <person name="Frapy E."/>
            <person name="Garry L."/>
            <person name="Ghigo J.M."/>
            <person name="Gilles A.M."/>
            <person name="Johnson J."/>
            <person name="Le Bouguenec C."/>
            <person name="Lescat M."/>
            <person name="Mangenot S."/>
            <person name="Martinez-Jehanne V."/>
            <person name="Matic I."/>
            <person name="Nassif X."/>
            <person name="Oztas S."/>
            <person name="Petit M.A."/>
            <person name="Pichon C."/>
            <person name="Rouy Z."/>
            <person name="Ruf C.S."/>
            <person name="Schneider D."/>
            <person name="Tourret J."/>
            <person name="Vacherie B."/>
            <person name="Vallenet D."/>
            <person name="Medigue C."/>
            <person name="Rocha E.P.C."/>
            <person name="Denamur E."/>
        </authorList>
    </citation>
    <scope>NUCLEOTIDE SEQUENCE [LARGE SCALE GENOMIC DNA]</scope>
    <source>
        <strain>S88 / ExPEC</strain>
    </source>
</reference>
<dbReference type="EC" id="7.1.2.2" evidence="1"/>
<dbReference type="EMBL" id="CU928161">
    <property type="protein sequence ID" value="CAR05362.1"/>
    <property type="molecule type" value="Genomic_DNA"/>
</dbReference>
<dbReference type="RefSeq" id="WP_001176745.1">
    <property type="nucleotide sequence ID" value="NC_011742.1"/>
</dbReference>
<dbReference type="EMDB" id="EMD-8357"/>
<dbReference type="EMDB" id="EMD-8358"/>
<dbReference type="EMDB" id="EMD-8359"/>
<dbReference type="SMR" id="B7MGF4"/>
<dbReference type="GeneID" id="93778233"/>
<dbReference type="KEGG" id="ecz:ECS88_4156"/>
<dbReference type="HOGENOM" id="CLU_010091_2_1_6"/>
<dbReference type="Proteomes" id="UP000000747">
    <property type="component" value="Chromosome"/>
</dbReference>
<dbReference type="GO" id="GO:0005886">
    <property type="term" value="C:plasma membrane"/>
    <property type="evidence" value="ECO:0007669"/>
    <property type="project" value="UniProtKB-SubCell"/>
</dbReference>
<dbReference type="GO" id="GO:0045259">
    <property type="term" value="C:proton-transporting ATP synthase complex"/>
    <property type="evidence" value="ECO:0007669"/>
    <property type="project" value="UniProtKB-KW"/>
</dbReference>
<dbReference type="GO" id="GO:0043531">
    <property type="term" value="F:ADP binding"/>
    <property type="evidence" value="ECO:0007669"/>
    <property type="project" value="TreeGrafter"/>
</dbReference>
<dbReference type="GO" id="GO:0005524">
    <property type="term" value="F:ATP binding"/>
    <property type="evidence" value="ECO:0007669"/>
    <property type="project" value="UniProtKB-UniRule"/>
</dbReference>
<dbReference type="GO" id="GO:0046933">
    <property type="term" value="F:proton-transporting ATP synthase activity, rotational mechanism"/>
    <property type="evidence" value="ECO:0007669"/>
    <property type="project" value="UniProtKB-UniRule"/>
</dbReference>
<dbReference type="CDD" id="cd18113">
    <property type="entry name" value="ATP-synt_F1_alpha_C"/>
    <property type="match status" value="1"/>
</dbReference>
<dbReference type="CDD" id="cd18116">
    <property type="entry name" value="ATP-synt_F1_alpha_N"/>
    <property type="match status" value="1"/>
</dbReference>
<dbReference type="CDD" id="cd01132">
    <property type="entry name" value="F1-ATPase_alpha_CD"/>
    <property type="match status" value="1"/>
</dbReference>
<dbReference type="FunFam" id="1.20.150.20:FF:000001">
    <property type="entry name" value="ATP synthase subunit alpha"/>
    <property type="match status" value="1"/>
</dbReference>
<dbReference type="FunFam" id="2.40.30.20:FF:000001">
    <property type="entry name" value="ATP synthase subunit alpha"/>
    <property type="match status" value="1"/>
</dbReference>
<dbReference type="FunFam" id="3.40.50.300:FF:000002">
    <property type="entry name" value="ATP synthase subunit alpha"/>
    <property type="match status" value="1"/>
</dbReference>
<dbReference type="Gene3D" id="2.40.30.20">
    <property type="match status" value="1"/>
</dbReference>
<dbReference type="Gene3D" id="1.20.150.20">
    <property type="entry name" value="ATP synthase alpha/beta chain, C-terminal domain"/>
    <property type="match status" value="1"/>
</dbReference>
<dbReference type="Gene3D" id="3.40.50.300">
    <property type="entry name" value="P-loop containing nucleotide triphosphate hydrolases"/>
    <property type="match status" value="1"/>
</dbReference>
<dbReference type="HAMAP" id="MF_01346">
    <property type="entry name" value="ATP_synth_alpha_bact"/>
    <property type="match status" value="1"/>
</dbReference>
<dbReference type="InterPro" id="IPR023366">
    <property type="entry name" value="ATP_synth_asu-like_sf"/>
</dbReference>
<dbReference type="InterPro" id="IPR000793">
    <property type="entry name" value="ATP_synth_asu_C"/>
</dbReference>
<dbReference type="InterPro" id="IPR038376">
    <property type="entry name" value="ATP_synth_asu_C_sf"/>
</dbReference>
<dbReference type="InterPro" id="IPR033732">
    <property type="entry name" value="ATP_synth_F1_a_nt-bd_dom"/>
</dbReference>
<dbReference type="InterPro" id="IPR005294">
    <property type="entry name" value="ATP_synth_F1_asu"/>
</dbReference>
<dbReference type="InterPro" id="IPR020003">
    <property type="entry name" value="ATPase_a/bsu_AS"/>
</dbReference>
<dbReference type="InterPro" id="IPR004100">
    <property type="entry name" value="ATPase_F1/V1/A1_a/bsu_N"/>
</dbReference>
<dbReference type="InterPro" id="IPR036121">
    <property type="entry name" value="ATPase_F1/V1/A1_a/bsu_N_sf"/>
</dbReference>
<dbReference type="InterPro" id="IPR000194">
    <property type="entry name" value="ATPase_F1/V1/A1_a/bsu_nucl-bd"/>
</dbReference>
<dbReference type="InterPro" id="IPR027417">
    <property type="entry name" value="P-loop_NTPase"/>
</dbReference>
<dbReference type="NCBIfam" id="TIGR00962">
    <property type="entry name" value="atpA"/>
    <property type="match status" value="1"/>
</dbReference>
<dbReference type="NCBIfam" id="NF009884">
    <property type="entry name" value="PRK13343.1"/>
    <property type="match status" value="1"/>
</dbReference>
<dbReference type="PANTHER" id="PTHR48082">
    <property type="entry name" value="ATP SYNTHASE SUBUNIT ALPHA, MITOCHONDRIAL"/>
    <property type="match status" value="1"/>
</dbReference>
<dbReference type="PANTHER" id="PTHR48082:SF2">
    <property type="entry name" value="ATP SYNTHASE SUBUNIT ALPHA, MITOCHONDRIAL"/>
    <property type="match status" value="1"/>
</dbReference>
<dbReference type="Pfam" id="PF00006">
    <property type="entry name" value="ATP-synt_ab"/>
    <property type="match status" value="1"/>
</dbReference>
<dbReference type="Pfam" id="PF00306">
    <property type="entry name" value="ATP-synt_ab_C"/>
    <property type="match status" value="1"/>
</dbReference>
<dbReference type="Pfam" id="PF02874">
    <property type="entry name" value="ATP-synt_ab_N"/>
    <property type="match status" value="1"/>
</dbReference>
<dbReference type="SUPFAM" id="SSF47917">
    <property type="entry name" value="C-terminal domain of alpha and beta subunits of F1 ATP synthase"/>
    <property type="match status" value="1"/>
</dbReference>
<dbReference type="SUPFAM" id="SSF50615">
    <property type="entry name" value="N-terminal domain of alpha and beta subunits of F1 ATP synthase"/>
    <property type="match status" value="1"/>
</dbReference>
<dbReference type="SUPFAM" id="SSF52540">
    <property type="entry name" value="P-loop containing nucleoside triphosphate hydrolases"/>
    <property type="match status" value="1"/>
</dbReference>
<dbReference type="PROSITE" id="PS00152">
    <property type="entry name" value="ATPASE_ALPHA_BETA"/>
    <property type="match status" value="1"/>
</dbReference>
<organism>
    <name type="scientific">Escherichia coli O45:K1 (strain S88 / ExPEC)</name>
    <dbReference type="NCBI Taxonomy" id="585035"/>
    <lineage>
        <taxon>Bacteria</taxon>
        <taxon>Pseudomonadati</taxon>
        <taxon>Pseudomonadota</taxon>
        <taxon>Gammaproteobacteria</taxon>
        <taxon>Enterobacterales</taxon>
        <taxon>Enterobacteriaceae</taxon>
        <taxon>Escherichia</taxon>
    </lineage>
</organism>
<evidence type="ECO:0000255" key="1">
    <source>
        <dbReference type="HAMAP-Rule" id="MF_01346"/>
    </source>
</evidence>
<comment type="function">
    <text evidence="1">Produces ATP from ADP in the presence of a proton gradient across the membrane. The alpha chain is a regulatory subunit.</text>
</comment>
<comment type="catalytic activity">
    <reaction evidence="1">
        <text>ATP + H2O + 4 H(+)(in) = ADP + phosphate + 5 H(+)(out)</text>
        <dbReference type="Rhea" id="RHEA:57720"/>
        <dbReference type="ChEBI" id="CHEBI:15377"/>
        <dbReference type="ChEBI" id="CHEBI:15378"/>
        <dbReference type="ChEBI" id="CHEBI:30616"/>
        <dbReference type="ChEBI" id="CHEBI:43474"/>
        <dbReference type="ChEBI" id="CHEBI:456216"/>
        <dbReference type="EC" id="7.1.2.2"/>
    </reaction>
</comment>
<comment type="subunit">
    <text evidence="1">F-type ATPases have 2 components, CF(1) - the catalytic core - and CF(0) - the membrane proton channel. CF(1) has five subunits: alpha(3), beta(3), gamma(1), delta(1), epsilon(1). CF(0) has three main subunits: a(1), b(2) and c(9-12). The alpha and beta chains form an alternating ring which encloses part of the gamma chain. CF(1) is attached to CF(0) by a central stalk formed by the gamma and epsilon chains, while a peripheral stalk is formed by the delta and b chains.</text>
</comment>
<comment type="subcellular location">
    <subcellularLocation>
        <location evidence="1">Cell inner membrane</location>
        <topology evidence="1">Peripheral membrane protein</topology>
    </subcellularLocation>
</comment>
<comment type="similarity">
    <text evidence="1">Belongs to the ATPase alpha/beta chains family.</text>
</comment>